<evidence type="ECO:0000250" key="1"/>
<evidence type="ECO:0000250" key="2">
    <source>
        <dbReference type="UniProtKB" id="P03332"/>
    </source>
</evidence>
<evidence type="ECO:0000250" key="3">
    <source>
        <dbReference type="UniProtKB" id="P03336"/>
    </source>
</evidence>
<evidence type="ECO:0000255" key="4"/>
<evidence type="ECO:0000256" key="5">
    <source>
        <dbReference type="SAM" id="MobiDB-lite"/>
    </source>
</evidence>
<evidence type="ECO:0000305" key="6"/>
<sequence>MGQAGSKGLLTPLECILKNFSDFKKRAGDYGEDVDSFALRKLCELEWPTFGVGWPKEGTLDFKVVAAVRNIVFGNPGHPDQVIYITVWTDITIERPKYLKSCGCKPHRTSKVLLASQKVNPRRPVLPSAPESPPRIRRAQFLDERPLSPAPAPPPPYPEVSAIVEDTREGQQPDSTVMTSPPHTRSGLEFGAQGPSGMYPLRETGERDMTGRPMRTYVPFTTSDLYNWKNQNPSSFSQAPDQVISLLESVFYTHQPTWDDCQQLLRTLFTTEERERVRTESRREVRNDQGVQVTDEREIEAQFPATRPDWVGS</sequence>
<gene>
    <name type="primary">gag</name>
</gene>
<feature type="initiator methionine" description="Removed; by host" evidence="1">
    <location>
        <position position="1"/>
    </location>
</feature>
<feature type="chain" id="PRO_0000390796" description="Gag polyprotein">
    <location>
        <begin position="2"/>
        <end position="313" status="greater than"/>
    </location>
</feature>
<feature type="chain" id="PRO_0000040821" description="Matrix protein p15" evidence="4">
    <location>
        <begin position="2"/>
        <end status="unknown"/>
    </location>
</feature>
<feature type="chain" id="PRO_0000040822" description="RNA-binding phosphoprotein p12" evidence="4">
    <location>
        <begin status="unknown"/>
        <end position="199"/>
    </location>
</feature>
<feature type="chain" id="PRO_0000040823" description="Capsid protein p30" evidence="4">
    <location>
        <begin position="200"/>
        <end position="313" status="greater than"/>
    </location>
</feature>
<feature type="region of interest" description="Disordered" evidence="5">
    <location>
        <begin position="113"/>
        <end position="135"/>
    </location>
</feature>
<feature type="region of interest" description="Disordered" evidence="5">
    <location>
        <begin position="167"/>
        <end position="197"/>
    </location>
</feature>
<feature type="region of interest" description="Disordered" evidence="5">
    <location>
        <begin position="280"/>
        <end position="313"/>
    </location>
</feature>
<feature type="short sequence motif" description="PTAP/PSAP motif">
    <location>
        <begin position="127"/>
        <end position="130"/>
    </location>
</feature>
<feature type="short sequence motif" description="PPXY motif">
    <location>
        <begin position="154"/>
        <end position="157"/>
    </location>
</feature>
<feature type="compositionally biased region" description="Polar residues" evidence="5">
    <location>
        <begin position="172"/>
        <end position="183"/>
    </location>
</feature>
<feature type="lipid moiety-binding region" description="N-myristoyl glycine; by host" evidence="1">
    <location>
        <position position="2"/>
    </location>
</feature>
<feature type="sequence conflict" description="In Ref. 2; AA sequence." evidence="6" ref="2">
    <original>T</original>
    <variation>G</variation>
    <location>
        <position position="210"/>
    </location>
</feature>
<feature type="sequence conflict" description="In Ref. 2; AA sequence." evidence="6" ref="2">
    <original>S</original>
    <variation>F</variation>
    <location>
        <position position="235"/>
    </location>
</feature>
<feature type="non-terminal residue">
    <location>
        <position position="313"/>
    </location>
</feature>
<accession>P03342</accession>
<dbReference type="EMBL" id="V01200">
    <property type="protein sequence ID" value="CAA24513.1"/>
    <property type="molecule type" value="Genomic_DNA"/>
</dbReference>
<dbReference type="PIR" id="A93904">
    <property type="entry name" value="FOVDA"/>
</dbReference>
<dbReference type="SMR" id="P03342"/>
<dbReference type="GO" id="GO:0020002">
    <property type="term" value="C:host cell plasma membrane"/>
    <property type="evidence" value="ECO:0007669"/>
    <property type="project" value="UniProtKB-SubCell"/>
</dbReference>
<dbReference type="GO" id="GO:0016020">
    <property type="term" value="C:membrane"/>
    <property type="evidence" value="ECO:0007669"/>
    <property type="project" value="UniProtKB-KW"/>
</dbReference>
<dbReference type="GO" id="GO:0019013">
    <property type="term" value="C:viral nucleocapsid"/>
    <property type="evidence" value="ECO:0007669"/>
    <property type="project" value="UniProtKB-KW"/>
</dbReference>
<dbReference type="GO" id="GO:0003723">
    <property type="term" value="F:RNA binding"/>
    <property type="evidence" value="ECO:0007669"/>
    <property type="project" value="UniProtKB-KW"/>
</dbReference>
<dbReference type="GO" id="GO:0039660">
    <property type="term" value="F:structural constituent of virion"/>
    <property type="evidence" value="ECO:0007669"/>
    <property type="project" value="UniProtKB-KW"/>
</dbReference>
<dbReference type="GO" id="GO:0039702">
    <property type="term" value="P:viral budding via host ESCRT complex"/>
    <property type="evidence" value="ECO:0007669"/>
    <property type="project" value="UniProtKB-KW"/>
</dbReference>
<dbReference type="Gene3D" id="1.10.150.180">
    <property type="entry name" value="Gamma-retroviral matrix domain"/>
    <property type="match status" value="1"/>
</dbReference>
<dbReference type="Gene3D" id="1.10.375.10">
    <property type="entry name" value="Human Immunodeficiency Virus Type 1 Capsid Protein"/>
    <property type="match status" value="1"/>
</dbReference>
<dbReference type="InterPro" id="IPR000840">
    <property type="entry name" value="G_retro_matrix"/>
</dbReference>
<dbReference type="InterPro" id="IPR036946">
    <property type="entry name" value="G_retro_matrix_sf"/>
</dbReference>
<dbReference type="InterPro" id="IPR003036">
    <property type="entry name" value="Gag_P30"/>
</dbReference>
<dbReference type="InterPro" id="IPR008919">
    <property type="entry name" value="Retrov_capsid_N"/>
</dbReference>
<dbReference type="InterPro" id="IPR050462">
    <property type="entry name" value="Retroviral_Gag-Pol_poly"/>
</dbReference>
<dbReference type="InterPro" id="IPR010999">
    <property type="entry name" value="Retrovr_matrix"/>
</dbReference>
<dbReference type="PANTHER" id="PTHR33166">
    <property type="entry name" value="GAG_P30 DOMAIN-CONTAINING PROTEIN"/>
    <property type="match status" value="1"/>
</dbReference>
<dbReference type="Pfam" id="PF01140">
    <property type="entry name" value="Gag_MA"/>
    <property type="match status" value="1"/>
</dbReference>
<dbReference type="Pfam" id="PF02093">
    <property type="entry name" value="Gag_p30"/>
    <property type="match status" value="1"/>
</dbReference>
<dbReference type="SUPFAM" id="SSF47836">
    <property type="entry name" value="Retroviral matrix proteins"/>
    <property type="match status" value="1"/>
</dbReference>
<dbReference type="SUPFAM" id="SSF47943">
    <property type="entry name" value="Retrovirus capsid protein, N-terminal core domain"/>
    <property type="match status" value="1"/>
</dbReference>
<proteinExistence type="evidence at protein level"/>
<reference key="1">
    <citation type="journal article" date="1982" name="Proc. Natl. Acad. Sci. U.S.A.">
        <title>Spontaneous changes in nucleotide sequence in proviruses of spleen necrosis virus, an avian retrovirus.</title>
        <authorList>
            <person name="O'Rear J.J."/>
            <person name="Temin H.M."/>
        </authorList>
    </citation>
    <scope>NUCLEOTIDE SEQUENCE [GENOMIC DNA] (PROVIRUS)</scope>
</reference>
<reference key="2">
    <citation type="journal article" date="1981" name="J. Virol.">
        <title>Chemical and Immunological characterization of the major structural protein (p28) of MMC-1, a rhesus monkey endogenous type C virus: homology with the major structural protein of avian reticuloendotheliosis virus.</title>
        <authorList>
            <person name="Oroszlan S."/>
            <person name="Barbacid M."/>
            <person name="Copeland T.D."/>
            <person name="Aaronson S.A."/>
            <person name="Gilden R.V."/>
        </authorList>
    </citation>
    <scope>PROTEIN SEQUENCE OF 200-235</scope>
</reference>
<protein>
    <recommendedName>
        <fullName>Gag polyprotein</fullName>
    </recommendedName>
    <alternativeName>
        <fullName>Core polyprotein</fullName>
    </alternativeName>
    <component>
        <recommendedName>
            <fullName>Matrix protein p15</fullName>
            <shortName>MA</shortName>
        </recommendedName>
    </component>
    <component>
        <recommendedName>
            <fullName>RNA-binding phosphoprotein p12</fullName>
        </recommendedName>
        <alternativeName>
            <fullName>pp12</fullName>
        </alternativeName>
    </component>
    <component>
        <recommendedName>
            <fullName>Capsid protein p30</fullName>
            <shortName>CA</shortName>
        </recommendedName>
    </component>
</protein>
<comment type="function">
    <molecule>Gag polyprotein</molecule>
    <text evidence="2">Plays a role in budding and is processed by the viral protease during virion maturation outside the cell. During budding, it recruits, in a PPXY-dependent or independent manner, Nedd4-like ubiquitin ligases that conjugate ubiquitin molecules to Gag, or to Gag binding host factors. Interaction with HECT ubiquitin ligases probably link the viral protein to the host ESCRT pathway and facilitate release.</text>
</comment>
<comment type="function">
    <molecule>Matrix protein p15</molecule>
    <text evidence="2">Targets Gag and gag-pol polyproteins to the plasma membrane via a multipartite membrane binding signal, that includes its myristoylated N-terminus. Also mediates nuclear localization of the pre-integration complex.</text>
</comment>
<comment type="function">
    <molecule>RNA-binding phosphoprotein p12</molecule>
    <text evidence="2">Constituent of the pre-integration complex (PIC) which tethers the latter to mitotic chromosomes.</text>
</comment>
<comment type="function">
    <molecule>Capsid protein p30</molecule>
    <text evidence="3">Forms the spherical core of the virion that encapsulates the genomic RNA-nucleocapsid complex.</text>
</comment>
<comment type="subunit">
    <molecule>Capsid protein p30</molecule>
    <text evidence="2">Homohexamer. Further associates as homomultimer. The virus core is composed of a lattice formed from hexagonal rings, each containing six capsid monomers.</text>
</comment>
<comment type="subunit">
    <molecule>Gag polyprotein</molecule>
    <text evidence="2">Interacts (via PPXY motif) with host NEDD4 (By similarity). Interacts (via PSAP motif) with host TSG101 (By similarity).</text>
</comment>
<comment type="subcellular location">
    <molecule>Gag polyprotein</molecule>
    <subcellularLocation>
        <location evidence="1">Virion</location>
    </subcellularLocation>
    <subcellularLocation>
        <location evidence="6">Host cell membrane</location>
        <topology evidence="6">Lipid-anchor</topology>
    </subcellularLocation>
</comment>
<comment type="subcellular location">
    <molecule>Matrix protein p15</molecule>
    <subcellularLocation>
        <location evidence="6">Virion</location>
    </subcellularLocation>
</comment>
<comment type="subcellular location">
    <molecule>Capsid protein p30</molecule>
    <subcellularLocation>
        <location evidence="6">Virion</location>
    </subcellularLocation>
</comment>
<comment type="domain">
    <molecule>Gag polyprotein</molecule>
    <text evidence="2">Late-budding domains (L domains) are short sequence motifs essential for viral particle budding. They recruit proteins of the host ESCRT machinery (Endosomal Sorting Complex Required for Transport) or ESCRT-associated proteins. RNA-binding phosphoprotein p12 contains one L domain: a PPXY motif which potentially interacts with the WW domain 3 of NEDD4 E3 ubiquitin ligase. Matrix protein p15 contains one L domain: a PTAP/PSAP motif, which potentially interacts with the UEV domain of TSG101.</text>
</comment>
<comment type="PTM">
    <molecule>Gag polyprotein</molecule>
    <text evidence="2">Specific enzymatic cleavages by the viral protease yield mature proteins. The protease is released by autocatalytic cleavage. The polyprotein is cleaved during and after budding, this process is termed maturation.</text>
</comment>
<organismHost>
    <name type="scientific">Galliformes</name>
    <dbReference type="NCBI Taxonomy" id="8976"/>
</organismHost>
<keyword id="KW-0167">Capsid protein</keyword>
<keyword id="KW-0903">Direct protein sequencing</keyword>
<keyword id="KW-1032">Host cell membrane</keyword>
<keyword id="KW-1043">Host membrane</keyword>
<keyword id="KW-0945">Host-virus interaction</keyword>
<keyword id="KW-0449">Lipoprotein</keyword>
<keyword id="KW-0472">Membrane</keyword>
<keyword id="KW-0519">Myristate</keyword>
<keyword id="KW-0694">RNA-binding</keyword>
<keyword id="KW-1198">Viral budding</keyword>
<keyword id="KW-1187">Viral budding via the host ESCRT complexes</keyword>
<keyword id="KW-0468">Viral matrix protein</keyword>
<keyword id="KW-0543">Viral nucleoprotein</keyword>
<keyword id="KW-1188">Viral release from host cell</keyword>
<keyword id="KW-0946">Virion</keyword>
<organism>
    <name type="scientific">Avian spleen necrosis virus</name>
    <dbReference type="NCBI Taxonomy" id="11899"/>
    <lineage>
        <taxon>Viruses</taxon>
        <taxon>Riboviria</taxon>
        <taxon>Pararnavirae</taxon>
        <taxon>Artverviricota</taxon>
        <taxon>Revtraviricetes</taxon>
        <taxon>Ortervirales</taxon>
        <taxon>Retroviridae</taxon>
        <taxon>Orthoretrovirinae</taxon>
        <taxon>Gammaretrovirus</taxon>
        <taxon>Avian reticuloendotheliosis virus</taxon>
    </lineage>
</organism>
<name>GAG_AVISN</name>